<keyword id="KW-0002">3D-structure</keyword>
<keyword id="KW-0165">Cleavage on pair of basic residues</keyword>
<keyword id="KW-0903">Direct protein sequencing</keyword>
<keyword id="KW-0588">Pheromone</keyword>
<keyword id="KW-1185">Reference proteome</keyword>
<keyword id="KW-0677">Repeat</keyword>
<keyword id="KW-0732">Signal</keyword>
<dbReference type="EMBL" id="X01581">
    <property type="protein sequence ID" value="CAA25734.1"/>
    <property type="molecule type" value="Genomic_DNA"/>
</dbReference>
<dbReference type="EMBL" id="X01581">
    <property type="protein sequence ID" value="CAA25735.1"/>
    <property type="status" value="ALT_SEQ"/>
    <property type="molecule type" value="Genomic_DNA"/>
</dbReference>
<dbReference type="EMBL" id="X01581">
    <property type="protein sequence ID" value="CAA25736.1"/>
    <property type="status" value="ALT_SEQ"/>
    <property type="molecule type" value="Genomic_DNA"/>
</dbReference>
<dbReference type="EMBL" id="X01581">
    <property type="protein sequence ID" value="CAA25737.1"/>
    <property type="status" value="ALT_SEQ"/>
    <property type="molecule type" value="Genomic_DNA"/>
</dbReference>
<dbReference type="EMBL" id="X01581">
    <property type="protein sequence ID" value="CAA25738.1"/>
    <property type="status" value="ALT_SEQ"/>
    <property type="molecule type" value="Genomic_DNA"/>
</dbReference>
<dbReference type="EMBL" id="J01340">
    <property type="protein sequence ID" value="AAA88727.1"/>
    <property type="molecule type" value="Genomic_DNA"/>
</dbReference>
<dbReference type="EMBL" id="M55016">
    <property type="protein sequence ID" value="AAA34778.1"/>
    <property type="molecule type" value="Genomic_DNA"/>
</dbReference>
<dbReference type="EMBL" id="Z73543">
    <property type="protein sequence ID" value="CAA97899.1"/>
    <property type="molecule type" value="Genomic_DNA"/>
</dbReference>
<dbReference type="EMBL" id="M17301">
    <property type="protein sequence ID" value="AAA34777.1"/>
    <property type="molecule type" value="Genomic_DNA"/>
</dbReference>
<dbReference type="EMBL" id="BK006949">
    <property type="protein sequence ID" value="DAA11248.1"/>
    <property type="molecule type" value="Genomic_DNA"/>
</dbReference>
<dbReference type="PIR" id="S65199">
    <property type="entry name" value="JFBY1"/>
</dbReference>
<dbReference type="RefSeq" id="NP_015137.1">
    <property type="nucleotide sequence ID" value="NM_001184001.1"/>
</dbReference>
<dbReference type="PDB" id="7AD3">
    <property type="method" value="EM"/>
    <property type="resolution" value="3.50 A"/>
    <property type="chains" value="I/K=153-165"/>
</dbReference>
<dbReference type="PDB" id="7AFT">
    <property type="method" value="EM"/>
    <property type="resolution" value="4.40 A"/>
    <property type="chains" value="H=1-165"/>
</dbReference>
<dbReference type="PDB" id="7QA8">
    <property type="method" value="EM"/>
    <property type="resolution" value="2.70 A"/>
    <property type="chains" value="I/K=154-165"/>
</dbReference>
<dbReference type="PDB" id="7QBC">
    <property type="method" value="EM"/>
    <property type="resolution" value="3.53 A"/>
    <property type="chains" value="I/K=153-165"/>
</dbReference>
<dbReference type="PDB" id="7QBI">
    <property type="method" value="EM"/>
    <property type="resolution" value="3.46 A"/>
    <property type="chains" value="I/K=153-165"/>
</dbReference>
<dbReference type="PDBsum" id="7AD3"/>
<dbReference type="PDBsum" id="7AFT"/>
<dbReference type="PDBsum" id="7QA8"/>
<dbReference type="PDBsum" id="7QBC"/>
<dbReference type="PDBsum" id="7QBI"/>
<dbReference type="EMDB" id="EMD-11720"/>
<dbReference type="EMDB" id="EMD-11774"/>
<dbReference type="SMR" id="P01149"/>
<dbReference type="BioGRID" id="35996">
    <property type="interactions" value="21"/>
</dbReference>
<dbReference type="DIP" id="DIP-2393N"/>
<dbReference type="FunCoup" id="P01149">
    <property type="interactions" value="184"/>
</dbReference>
<dbReference type="IntAct" id="P01149">
    <property type="interactions" value="2"/>
</dbReference>
<dbReference type="STRING" id="4932.YPL187W"/>
<dbReference type="iPTMnet" id="P01149"/>
<dbReference type="PaxDb" id="4932-YPL187W"/>
<dbReference type="PeptideAtlas" id="P01149"/>
<dbReference type="EnsemblFungi" id="YPL187W_mRNA">
    <property type="protein sequence ID" value="YPL187W"/>
    <property type="gene ID" value="YPL187W"/>
</dbReference>
<dbReference type="GeneID" id="855914"/>
<dbReference type="KEGG" id="sce:YPL187W"/>
<dbReference type="AGR" id="SGD:S000006108"/>
<dbReference type="SGD" id="S000006108">
    <property type="gene designation" value="MF(ALPHA)1"/>
</dbReference>
<dbReference type="VEuPathDB" id="FungiDB:YPL187W"/>
<dbReference type="eggNOG" id="ENOG502S0T3">
    <property type="taxonomic scope" value="Eukaryota"/>
</dbReference>
<dbReference type="GeneTree" id="ENSGT00940000176792"/>
<dbReference type="HOGENOM" id="CLU_136956_0_0_1"/>
<dbReference type="InParanoid" id="P01149"/>
<dbReference type="OMA" id="AEAKWGW"/>
<dbReference type="OrthoDB" id="3766782at2759"/>
<dbReference type="BioGRID-ORCS" id="855914">
    <property type="hits" value="0 hits in 10 CRISPR screens"/>
</dbReference>
<dbReference type="PRO" id="PR:P01149"/>
<dbReference type="Proteomes" id="UP000002311">
    <property type="component" value="Chromosome XVI"/>
</dbReference>
<dbReference type="RNAct" id="P01149">
    <property type="molecule type" value="protein"/>
</dbReference>
<dbReference type="GO" id="GO:0005576">
    <property type="term" value="C:extracellular region"/>
    <property type="evidence" value="ECO:0000314"/>
    <property type="project" value="SGD"/>
</dbReference>
<dbReference type="GO" id="GO:1903135">
    <property type="term" value="F:cupric ion binding"/>
    <property type="evidence" value="ECO:0000314"/>
    <property type="project" value="SGD"/>
</dbReference>
<dbReference type="GO" id="GO:0000772">
    <property type="term" value="F:mating pheromone activity"/>
    <property type="evidence" value="ECO:0000314"/>
    <property type="project" value="SGD"/>
</dbReference>
<dbReference type="GO" id="GO:0007618">
    <property type="term" value="P:mating"/>
    <property type="evidence" value="ECO:0007669"/>
    <property type="project" value="InterPro"/>
</dbReference>
<dbReference type="GO" id="GO:0000750">
    <property type="term" value="P:pheromone-dependent signal transduction involved in conjugation with cellular fusion"/>
    <property type="evidence" value="ECO:0000315"/>
    <property type="project" value="SGD"/>
</dbReference>
<dbReference type="InterPro" id="IPR006742">
    <property type="entry name" value="Mating_factor_alpha_C"/>
</dbReference>
<dbReference type="InterPro" id="IPR008675">
    <property type="entry name" value="Mating_factor_alpha_N"/>
</dbReference>
<dbReference type="Pfam" id="PF04648">
    <property type="entry name" value="MF_alpha"/>
    <property type="match status" value="4"/>
</dbReference>
<dbReference type="Pfam" id="PF05436">
    <property type="entry name" value="MF_alpha_N"/>
    <property type="match status" value="1"/>
</dbReference>
<protein>
    <recommendedName>
        <fullName>Mating factor alpha-1</fullName>
    </recommendedName>
    <alternativeName>
        <fullName>Alpha-1 mating pheromone</fullName>
    </alternativeName>
    <component>
        <recommendedName>
            <fullName>Mating factor alpha</fullName>
        </recommendedName>
    </component>
</protein>
<name>MFAL1_YEAST</name>
<gene>
    <name type="primary">MF(ALPHA)1</name>
    <name type="synonym">MF-ALPHA-1</name>
    <name type="synonym">MFAL1</name>
    <name type="ordered locus">YPL187W</name>
</gene>
<sequence length="165" mass="18642">MRFPSIFTAVLFAASSALAAPVNTTTEDETAQIPAEAVIGYLDLEGDFDVAVLPFSNSTNNGLLFINTTIASIAAKEEGVSLDKREAEAWHWLQLKPGQPMYKREAEAEAWHWLQLKPGQPMYKREADAEAWHWLQLKPGQPMYKREADAEAWHWLQLKPGQPMY</sequence>
<accession>P01149</accession>
<accession>D6W3I2</accession>
<accession>P25041</accession>
<proteinExistence type="evidence at protein level"/>
<reference key="1">
    <citation type="journal article" date="1983" name="Nucleic Acids Res.">
        <title>Saccharomyces cerevisiae contains two discrete genes coding for the alpha-factor pheromone.</title>
        <authorList>
            <person name="Singh A."/>
            <person name="Chen E.Y."/>
            <person name="Lugovoy J.M."/>
            <person name="Chang C.N."/>
            <person name="Hitzeman R.A."/>
            <person name="Seeburg P.H."/>
        </authorList>
    </citation>
    <scope>NUCLEOTIDE SEQUENCE [GENOMIC DNA]</scope>
</reference>
<reference key="2">
    <citation type="journal article" date="1982" name="Cell">
        <title>Structure of a yeast pheromone gene (MF alpha): a putative alpha-factor precursor contains four tandem copies of mature alpha-factor.</title>
        <authorList>
            <person name="Kurjan J."/>
            <person name="Herskowitz I."/>
        </authorList>
    </citation>
    <scope>NUCLEOTIDE SEQUENCE [GENOMIC DNA]</scope>
</reference>
<reference key="3">
    <citation type="journal article" date="1988" name="Curr. Genet.">
        <title>Evidence for preferential multiplication of the internal unit in tandem repeats of the mating factor alpha genes in Saccharomyces yeasts.</title>
        <authorList>
            <person name="Kitada K."/>
            <person name="Hishinuma F."/>
        </authorList>
    </citation>
    <scope>NUCLEOTIDE SEQUENCE [GENOMIC DNA]</scope>
    <source>
        <strain>Italicus / ATCC 2367 / CBS 423 / IFO 0253 / NRRL Y-1536</strain>
    </source>
</reference>
<reference key="4">
    <citation type="journal article" date="1997" name="Nature">
        <title>The nucleotide sequence of Saccharomyces cerevisiae chromosome XVI.</title>
        <authorList>
            <person name="Bussey H."/>
            <person name="Storms R.K."/>
            <person name="Ahmed A."/>
            <person name="Albermann K."/>
            <person name="Allen E."/>
            <person name="Ansorge W."/>
            <person name="Araujo R."/>
            <person name="Aparicio A."/>
            <person name="Barrell B.G."/>
            <person name="Badcock K."/>
            <person name="Benes V."/>
            <person name="Botstein D."/>
            <person name="Bowman S."/>
            <person name="Brueckner M."/>
            <person name="Carpenter J."/>
            <person name="Cherry J.M."/>
            <person name="Chung E."/>
            <person name="Churcher C.M."/>
            <person name="Coster F."/>
            <person name="Davis K."/>
            <person name="Davis R.W."/>
            <person name="Dietrich F.S."/>
            <person name="Delius H."/>
            <person name="DiPaolo T."/>
            <person name="Dubois E."/>
            <person name="Duesterhoeft A."/>
            <person name="Duncan M."/>
            <person name="Floeth M."/>
            <person name="Fortin N."/>
            <person name="Friesen J.D."/>
            <person name="Fritz C."/>
            <person name="Goffeau A."/>
            <person name="Hall J."/>
            <person name="Hebling U."/>
            <person name="Heumann K."/>
            <person name="Hilbert H."/>
            <person name="Hillier L.W."/>
            <person name="Hunicke-Smith S."/>
            <person name="Hyman R.W."/>
            <person name="Johnston M."/>
            <person name="Kalman S."/>
            <person name="Kleine K."/>
            <person name="Komp C."/>
            <person name="Kurdi O."/>
            <person name="Lashkari D."/>
            <person name="Lew H."/>
            <person name="Lin A."/>
            <person name="Lin D."/>
            <person name="Louis E.J."/>
            <person name="Marathe R."/>
            <person name="Messenguy F."/>
            <person name="Mewes H.-W."/>
            <person name="Mirtipati S."/>
            <person name="Moestl D."/>
            <person name="Mueller-Auer S."/>
            <person name="Namath A."/>
            <person name="Nentwich U."/>
            <person name="Oefner P."/>
            <person name="Pearson D."/>
            <person name="Petel F.X."/>
            <person name="Pohl T.M."/>
            <person name="Purnelle B."/>
            <person name="Rajandream M.A."/>
            <person name="Rechmann S."/>
            <person name="Rieger M."/>
            <person name="Riles L."/>
            <person name="Roberts D."/>
            <person name="Schaefer M."/>
            <person name="Scharfe M."/>
            <person name="Scherens B."/>
            <person name="Schramm S."/>
            <person name="Schroeder M."/>
            <person name="Sdicu A.-M."/>
            <person name="Tettelin H."/>
            <person name="Urrestarazu L.A."/>
            <person name="Ushinsky S."/>
            <person name="Vierendeels F."/>
            <person name="Vissers S."/>
            <person name="Voss H."/>
            <person name="Walsh S.V."/>
            <person name="Wambutt R."/>
            <person name="Wang Y."/>
            <person name="Wedler E."/>
            <person name="Wedler H."/>
            <person name="Winnett E."/>
            <person name="Zhong W.-W."/>
            <person name="Zollner A."/>
            <person name="Vo D.H."/>
            <person name="Hani J."/>
        </authorList>
    </citation>
    <scope>NUCLEOTIDE SEQUENCE [LARGE SCALE GENOMIC DNA]</scope>
    <source>
        <strain>ATCC 204508 / S288c</strain>
    </source>
</reference>
<reference key="5">
    <citation type="journal article" date="2014" name="G3 (Bethesda)">
        <title>The reference genome sequence of Saccharomyces cerevisiae: Then and now.</title>
        <authorList>
            <person name="Engel S.R."/>
            <person name="Dietrich F.S."/>
            <person name="Fisk D.G."/>
            <person name="Binkley G."/>
            <person name="Balakrishnan R."/>
            <person name="Costanzo M.C."/>
            <person name="Dwight S.S."/>
            <person name="Hitz B.C."/>
            <person name="Karra K."/>
            <person name="Nash R.S."/>
            <person name="Weng S."/>
            <person name="Wong E.D."/>
            <person name="Lloyd P."/>
            <person name="Skrzypek M.S."/>
            <person name="Miyasato S.R."/>
            <person name="Simison M."/>
            <person name="Cherry J.M."/>
        </authorList>
    </citation>
    <scope>GENOME REANNOTATION</scope>
    <source>
        <strain>ATCC 204508 / S288c</strain>
    </source>
</reference>
<reference key="6">
    <citation type="journal article" date="1987" name="Mol. Cell. Biol.">
        <title>Identification of sequence elements that confer cell-type-specific control of MF alpha 1 expression in Saccharomyces cerevisiae.</title>
        <authorList>
            <person name="Inokuchi K."/>
            <person name="Nakayama A."/>
            <person name="Hishinuma F."/>
        </authorList>
    </citation>
    <scope>NUCLEOTIDE SEQUENCE [GENOMIC DNA] OF 1-9</scope>
</reference>
<reference key="7">
    <citation type="journal article" date="1976" name="Eur. J. Biochem.">
        <title>Primary structure of alpha-factor peptides from Saccharomyces cerevisiae.</title>
        <authorList>
            <person name="Stoetzler D."/>
            <person name="Kiltz H.-H."/>
            <person name="Duntze W."/>
        </authorList>
    </citation>
    <scope>PROTEIN SEQUENCE OF THE ACTIVE FACTOR</scope>
</reference>
<reference key="8">
    <citation type="journal article" date="1977" name="J. Biochem.">
        <title>Purification and amino acid sequence of mating factor from Saccharomyces cerevisiae.</title>
        <authorList>
            <person name="Tanaka T."/>
            <person name="Kita H."/>
            <person name="Murakami T."/>
            <person name="Narita K."/>
        </authorList>
    </citation>
    <scope>PROTEIN SEQUENCE OF THE ACTIVE FACTOR</scope>
</reference>
<organism>
    <name type="scientific">Saccharomyces cerevisiae (strain ATCC 204508 / S288c)</name>
    <name type="common">Baker's yeast</name>
    <dbReference type="NCBI Taxonomy" id="559292"/>
    <lineage>
        <taxon>Eukaryota</taxon>
        <taxon>Fungi</taxon>
        <taxon>Dikarya</taxon>
        <taxon>Ascomycota</taxon>
        <taxon>Saccharomycotina</taxon>
        <taxon>Saccharomycetes</taxon>
        <taxon>Saccharomycetales</taxon>
        <taxon>Saccharomycetaceae</taxon>
        <taxon>Saccharomyces</taxon>
    </lineage>
</organism>
<evidence type="ECO:0000305" key="1"/>
<evidence type="ECO:0000305" key="2">
    <source>
    </source>
</evidence>
<evidence type="ECO:0000305" key="3">
    <source ref="7"/>
</evidence>
<feature type="signal peptide" description="Or 20" evidence="2 3">
    <location>
        <begin position="1"/>
        <end position="19"/>
    </location>
</feature>
<feature type="propeptide" id="PRO_0000419673">
    <location>
        <begin position="20"/>
        <end position="89"/>
    </location>
</feature>
<feature type="peptide" id="PRO_0000021697" description="Mating factor alpha">
    <location>
        <begin position="90"/>
        <end position="102"/>
    </location>
</feature>
<feature type="propeptide" id="PRO_0000419674">
    <location>
        <begin position="105"/>
        <end position="110"/>
    </location>
</feature>
<feature type="peptide" id="PRO_0000021698" description="Mating factor alpha">
    <location>
        <begin position="111"/>
        <end position="123"/>
    </location>
</feature>
<feature type="propeptide" id="PRO_0000419675">
    <location>
        <begin position="126"/>
        <end position="131"/>
    </location>
</feature>
<feature type="peptide" id="PRO_0000021699" description="Mating factor alpha">
    <location>
        <begin position="132"/>
        <end position="144"/>
    </location>
</feature>
<feature type="propeptide" id="PRO_0000419676">
    <location>
        <begin position="147"/>
        <end position="152"/>
    </location>
</feature>
<feature type="peptide" id="PRO_0000021700" description="Mating factor alpha">
    <location>
        <begin position="153"/>
        <end position="165"/>
    </location>
</feature>
<feature type="sequence variant" description="In strain: Italicus /IFO 0253.">
    <original>Y</original>
    <variation>YKREADAEAWHWLQLKPGQPMY</variation>
    <location>
        <position position="165"/>
    </location>
</feature>
<feature type="sequence conflict" description="In Ref. 2; AAA88727." evidence="1" ref="2">
    <original>L</original>
    <variation>S</variation>
    <location>
        <position position="42"/>
    </location>
</feature>
<feature type="sequence conflict" description="In Ref. 3; AAA34778." evidence="1" ref="3">
    <original>E</original>
    <variation>D</variation>
    <location>
        <position position="107"/>
    </location>
</feature>
<comment type="function">
    <text>The active factor is excreted into the culture medium by haploid cells of the alpha mating type and acts on cells of the opposite mating type (type A). It mediates the conjugation process between the two types by inhibiting the initiation of DNA synthesis in type a cells and synchronizing them with type alpha.</text>
</comment>
<comment type="domain">
    <text>The mating factor alpha-1 precursor is identical in S.italicus, S.uvarum and S.cerevisiae, except for the number of tandem repeat units: 5, 3 and 4 respectively.</text>
</comment>